<organism>
    <name type="scientific">Thermococcus kodakarensis (strain ATCC BAA-918 / JCM 12380 / KOD1)</name>
    <name type="common">Pyrococcus kodakaraensis (strain KOD1)</name>
    <dbReference type="NCBI Taxonomy" id="69014"/>
    <lineage>
        <taxon>Archaea</taxon>
        <taxon>Methanobacteriati</taxon>
        <taxon>Methanobacteriota</taxon>
        <taxon>Thermococci</taxon>
        <taxon>Thermococcales</taxon>
        <taxon>Thermococcaceae</taxon>
        <taxon>Thermococcus</taxon>
    </lineage>
</organism>
<protein>
    <recommendedName>
        <fullName evidence="1">IMP cyclohydrolase</fullName>
        <ecNumber evidence="1">3.5.4.10</ecNumber>
    </recommendedName>
    <alternativeName>
        <fullName evidence="1">IMP synthase</fullName>
    </alternativeName>
    <alternativeName>
        <fullName evidence="1">Inosinicase</fullName>
    </alternativeName>
</protein>
<keyword id="KW-0378">Hydrolase</keyword>
<keyword id="KW-0658">Purine biosynthesis</keyword>
<keyword id="KW-1185">Reference proteome</keyword>
<gene>
    <name evidence="1" type="primary">purO</name>
    <name type="ordered locus">TK0430</name>
</gene>
<comment type="function">
    <text evidence="1">Catalyzes the cyclization of 5-formylamidoimidazole-4-carboxamide ribonucleotide to IMP.</text>
</comment>
<comment type="catalytic activity">
    <reaction evidence="1">
        <text>IMP + H2O = 5-formamido-1-(5-phospho-D-ribosyl)imidazole-4-carboxamide</text>
        <dbReference type="Rhea" id="RHEA:18445"/>
        <dbReference type="ChEBI" id="CHEBI:15377"/>
        <dbReference type="ChEBI" id="CHEBI:58053"/>
        <dbReference type="ChEBI" id="CHEBI:58467"/>
        <dbReference type="EC" id="3.5.4.10"/>
    </reaction>
</comment>
<comment type="pathway">
    <text evidence="1">Purine metabolism; IMP biosynthesis via de novo pathway; IMP from 5-formamido-1-(5-phospho-D-ribosyl)imidazole-4-carboxamide: step 1/1.</text>
</comment>
<comment type="similarity">
    <text evidence="1">Belongs to the archaeal IMP cyclohydrolase family.</text>
</comment>
<evidence type="ECO:0000255" key="1">
    <source>
        <dbReference type="HAMAP-Rule" id="MF_00705"/>
    </source>
</evidence>
<name>PURO_THEKO</name>
<feature type="chain" id="PRO_0000349170" description="IMP cyclohydrolase">
    <location>
        <begin position="1"/>
        <end position="198"/>
    </location>
</feature>
<dbReference type="EC" id="3.5.4.10" evidence="1"/>
<dbReference type="EMBL" id="AP006878">
    <property type="protein sequence ID" value="BAD84619.1"/>
    <property type="molecule type" value="Genomic_DNA"/>
</dbReference>
<dbReference type="RefSeq" id="WP_011249385.1">
    <property type="nucleotide sequence ID" value="NC_006624.1"/>
</dbReference>
<dbReference type="SMR" id="Q5JD29"/>
<dbReference type="STRING" id="69014.TK0430"/>
<dbReference type="EnsemblBacteria" id="BAD84619">
    <property type="protein sequence ID" value="BAD84619"/>
    <property type="gene ID" value="TK0430"/>
</dbReference>
<dbReference type="GeneID" id="78446940"/>
<dbReference type="KEGG" id="tko:TK0430"/>
<dbReference type="PATRIC" id="fig|69014.16.peg.422"/>
<dbReference type="eggNOG" id="arCOG04727">
    <property type="taxonomic scope" value="Archaea"/>
</dbReference>
<dbReference type="HOGENOM" id="CLU_1352116_0_0_2"/>
<dbReference type="InParanoid" id="Q5JD29"/>
<dbReference type="OrthoDB" id="92928at2157"/>
<dbReference type="PhylomeDB" id="Q5JD29"/>
<dbReference type="BRENDA" id="3.5.4.10">
    <property type="organism ID" value="5246"/>
</dbReference>
<dbReference type="UniPathway" id="UPA00074">
    <property type="reaction ID" value="UER00135"/>
</dbReference>
<dbReference type="Proteomes" id="UP000000536">
    <property type="component" value="Chromosome"/>
</dbReference>
<dbReference type="GO" id="GO:0003937">
    <property type="term" value="F:IMP cyclohydrolase activity"/>
    <property type="evidence" value="ECO:0007669"/>
    <property type="project" value="UniProtKB-UniRule"/>
</dbReference>
<dbReference type="GO" id="GO:0006189">
    <property type="term" value="P:'de novo' IMP biosynthetic process"/>
    <property type="evidence" value="ECO:0007669"/>
    <property type="project" value="UniProtKB-UniRule"/>
</dbReference>
<dbReference type="Gene3D" id="3.60.20.20">
    <property type="entry name" value="Inosine monophosphate cyclohydrolase-like"/>
    <property type="match status" value="1"/>
</dbReference>
<dbReference type="HAMAP" id="MF_00705">
    <property type="entry name" value="IMP_cyclohydrol"/>
    <property type="match status" value="1"/>
</dbReference>
<dbReference type="InterPro" id="IPR010191">
    <property type="entry name" value="IMP_cyclohydrolase"/>
</dbReference>
<dbReference type="InterPro" id="IPR020600">
    <property type="entry name" value="IMP_cyclohydrolase-like"/>
</dbReference>
<dbReference type="InterPro" id="IPR036795">
    <property type="entry name" value="IMP_cyclohydrolase-like_sf"/>
</dbReference>
<dbReference type="NCBIfam" id="NF003167">
    <property type="entry name" value="PRK04151.1"/>
    <property type="match status" value="1"/>
</dbReference>
<dbReference type="NCBIfam" id="TIGR01922">
    <property type="entry name" value="purO_arch"/>
    <property type="match status" value="1"/>
</dbReference>
<dbReference type="Pfam" id="PF07826">
    <property type="entry name" value="IMP_cyclohyd"/>
    <property type="match status" value="1"/>
</dbReference>
<dbReference type="PIRSF" id="PIRSF004866">
    <property type="entry name" value="IMP_cclhdr_arch"/>
    <property type="match status" value="1"/>
</dbReference>
<dbReference type="SUPFAM" id="SSF75569">
    <property type="entry name" value="Archaeal IMP cyclohydrolase PurO"/>
    <property type="match status" value="1"/>
</dbReference>
<sequence length="198" mass="22625">MRYVGRTLGIGLNNGKPFAFYLLCSRSFPNRRAVVKGNGVYILNQTETENPYVSYPVVRLMEDYAVVTNGLHTDFIAQALEWERPRKALVHVLDALDYERDDYSTPRIAGIIQHGGRRGWLGFVGRDMLWMRELELEEGKAFLTATYNMEGFESIELAFSTPEELAEKVMELPFEHKVLAIGIVENEKGWELSFTPSL</sequence>
<reference key="1">
    <citation type="journal article" date="2005" name="Genome Res.">
        <title>Complete genome sequence of the hyperthermophilic archaeon Thermococcus kodakaraensis KOD1 and comparison with Pyrococcus genomes.</title>
        <authorList>
            <person name="Fukui T."/>
            <person name="Atomi H."/>
            <person name="Kanai T."/>
            <person name="Matsumi R."/>
            <person name="Fujiwara S."/>
            <person name="Imanaka T."/>
        </authorList>
    </citation>
    <scope>NUCLEOTIDE SEQUENCE [LARGE SCALE GENOMIC DNA]</scope>
    <source>
        <strain>ATCC BAA-918 / JCM 12380 / KOD1</strain>
    </source>
</reference>
<proteinExistence type="inferred from homology"/>
<accession>Q5JD29</accession>